<comment type="function">
    <text evidence="1">A global transcription regulator. Complexes with cyclic AMP (cAMP) which allosterically activates DNA binding to regulate transcription. It can act as an activator, repressor, coactivator or corepressor. Induces a severe bend in DNA. Acts as a negative regulator of its own synthesis as well as for adenylate cyclase (cyaA), which generates cAMP. Plays a major role in carbon catabolite repression (CCR) (By similarity).</text>
</comment>
<comment type="subunit">
    <text evidence="1">Homodimer, which upon binding cAMP is able to bind DNA. Binds the N- and C-terminus of RNA polymerase subunit RpoA and sigma-70 (RpoD) (By similarity).</text>
</comment>
<comment type="domain">
    <text evidence="1">The N-terminal domain binds cAMP and is responsible for homodimerization, while the C-terminal domain binds DNA when cAMP is bound.</text>
</comment>
<comment type="disruption phenotype">
    <text evidence="3">Decreases expression of genes encoding virulence proteins (PubMed:19229334). Drastically decreases survival in host macrophages (PubMed:19229334). Decreases virulence in mouse (PubMed:19229334).</text>
</comment>
<protein>
    <recommendedName>
        <fullName>cAMP-activated global transcriptional regulator CRP</fullName>
    </recommendedName>
    <alternativeName>
        <fullName>Catabolite activator protein</fullName>
        <shortName>CAP</shortName>
    </alternativeName>
    <alternativeName>
        <fullName>Catabolite gene activator</fullName>
    </alternativeName>
    <alternativeName>
        <fullName>cAMP receptor protein</fullName>
        <shortName>CRP</shortName>
    </alternativeName>
    <alternativeName>
        <fullName>cAMP regulatory protein</fullName>
    </alternativeName>
</protein>
<evidence type="ECO:0000250" key="1"/>
<evidence type="ECO:0000255" key="2">
    <source>
        <dbReference type="PROSITE-ProRule" id="PRU00387"/>
    </source>
</evidence>
<evidence type="ECO:0000269" key="3">
    <source>
    </source>
</evidence>
<evidence type="ECO:0000269" key="4">
    <source>
    </source>
</evidence>
<evidence type="ECO:0000303" key="5">
    <source>
    </source>
</evidence>
<evidence type="ECO:0000305" key="6"/>
<feature type="chain" id="PRO_0000100150" description="cAMP-activated global transcriptional regulator CRP">
    <location>
        <begin position="1"/>
        <end position="210"/>
    </location>
</feature>
<feature type="domain" description="HTH crp-type" evidence="2">
    <location>
        <begin position="138"/>
        <end position="210"/>
    </location>
</feature>
<feature type="DNA-binding region" description="H-T-H motif" evidence="2">
    <location>
        <begin position="180"/>
        <end position="186"/>
    </location>
</feature>
<feature type="region of interest" description="Activating region 2 (AR2); probably contacts the N-terminus of RpoA" evidence="1">
    <location>
        <begin position="20"/>
        <end position="22"/>
    </location>
</feature>
<feature type="region of interest" description="Activating region 3 (AR3); probably contacts sigma-70 (RpoD)" evidence="1">
    <location>
        <begin position="53"/>
        <end position="59"/>
    </location>
</feature>
<feature type="region of interest" description="Activating region 1 (AR1); probably contacts the C-terminus of RpoA" evidence="1">
    <location>
        <begin position="154"/>
        <end position="163"/>
    </location>
</feature>
<feature type="binding site" evidence="1">
    <location>
        <begin position="57"/>
        <end position="63"/>
    </location>
    <ligand>
        <name>3',5'-cyclic AMP</name>
        <dbReference type="ChEBI" id="CHEBI:58165"/>
        <label>1</label>
    </ligand>
</feature>
<feature type="binding site" evidence="1">
    <location>
        <begin position="72"/>
        <end position="74"/>
    </location>
    <ligand>
        <name>3',5'-cyclic AMP</name>
        <dbReference type="ChEBI" id="CHEBI:58165"/>
        <label>1</label>
    </ligand>
</feature>
<feature type="binding site" evidence="1">
    <location>
        <begin position="83"/>
        <end position="84"/>
    </location>
    <ligand>
        <name>3',5'-cyclic AMP</name>
        <dbReference type="ChEBI" id="CHEBI:58165"/>
        <label>1</label>
    </ligand>
</feature>
<feature type="binding site" evidence="1">
    <location>
        <begin position="128"/>
        <end position="129"/>
    </location>
    <ligand>
        <name>3',5'-cyclic AMP</name>
        <dbReference type="ChEBI" id="CHEBI:58165"/>
        <label>1</label>
    </ligand>
</feature>
<feature type="binding site" evidence="1">
    <location>
        <begin position="136"/>
        <end position="137"/>
    </location>
    <ligand>
        <name>3',5'-cyclic AMP</name>
        <dbReference type="ChEBI" id="CHEBI:58165"/>
        <label>2</label>
    </ligand>
</feature>
<feature type="binding site" evidence="1">
    <location>
        <begin position="171"/>
        <end position="181"/>
    </location>
    <ligand>
        <name>3',5'-cyclic AMP</name>
        <dbReference type="ChEBI" id="CHEBI:58165"/>
        <label>2</label>
    </ligand>
</feature>
<feature type="site" description="Activating region 2 (AR2); probably contacts the N-terminus of RpoA" evidence="1">
    <location>
        <position position="97"/>
    </location>
</feature>
<feature type="site" description="Activating region 2 (AR2); probably contacts the N-terminus of RpoA" evidence="1">
    <location>
        <position position="102"/>
    </location>
</feature>
<feature type="modified residue" description="N6-acetyllysine" evidence="1">
    <location>
        <position position="101"/>
    </location>
</feature>
<feature type="mutagenesis site" description="In acr-4 and acr-3 respectively; higher levels of cAMP synthesis." evidence="4">
    <original>K</original>
    <variation>Q</variation>
    <variation>T</variation>
    <location>
        <position position="131"/>
    </location>
</feature>
<feature type="sequence conflict" description="In Ref. 2; AAA62414." evidence="6" ref="2">
    <original>L</original>
    <variation>S</variation>
    <location>
        <position position="40"/>
    </location>
</feature>
<feature type="sequence conflict" description="In Ref. 2; AAA62414." evidence="6" ref="2">
    <original>S</original>
    <variation>A</variation>
    <location>
        <position position="119"/>
    </location>
</feature>
<reference key="1">
    <citation type="journal article" date="1986" name="J. Bacteriol.">
        <title>crp genes of Shigella flexneri, Salmonella typhimurium, and Escherichia coli.</title>
        <authorList>
            <person name="Cossart P."/>
            <person name="Groisman E.A."/>
            <person name="Serre M.-C."/>
            <person name="Casadaban M.J."/>
            <person name="Gicquel-Sanzey B."/>
        </authorList>
    </citation>
    <scope>NUCLEOTIDE SEQUENCE [GENOMIC DNA]</scope>
    <source>
        <strain>LT2 / SGSC1412 / ATCC 700720</strain>
    </source>
</reference>
<reference key="2">
    <citation type="journal article" date="1986" name="J. Bacteriol.">
        <title>Cloning and DNA sequence analysis of the wild-type and mutant cyclic AMP receptor protein genes from Salmonella typhimurium.</title>
        <authorList>
            <person name="Schroeder C.J."/>
            <person name="Dobrogosz W.J."/>
        </authorList>
    </citation>
    <scope>NUCLEOTIDE SEQUENCE [GENOMIC DNA]</scope>
    <scope>MUTAGENESIS OF LYS-131</scope>
    <source>
        <strain>LT2 / SGSC1412 / ATCC 700720</strain>
    </source>
</reference>
<reference key="3">
    <citation type="journal article" date="2001" name="Nature">
        <title>Complete genome sequence of Salmonella enterica serovar Typhimurium LT2.</title>
        <authorList>
            <person name="McClelland M."/>
            <person name="Sanderson K.E."/>
            <person name="Spieth J."/>
            <person name="Clifton S.W."/>
            <person name="Latreille P."/>
            <person name="Courtney L."/>
            <person name="Porwollik S."/>
            <person name="Ali J."/>
            <person name="Dante M."/>
            <person name="Du F."/>
            <person name="Hou S."/>
            <person name="Layman D."/>
            <person name="Leonard S."/>
            <person name="Nguyen C."/>
            <person name="Scott K."/>
            <person name="Holmes A."/>
            <person name="Grewal N."/>
            <person name="Mulvaney E."/>
            <person name="Ryan E."/>
            <person name="Sun H."/>
            <person name="Florea L."/>
            <person name="Miller W."/>
            <person name="Stoneking T."/>
            <person name="Nhan M."/>
            <person name="Waterston R."/>
            <person name="Wilson R.K."/>
        </authorList>
    </citation>
    <scope>NUCLEOTIDE SEQUENCE [LARGE SCALE GENOMIC DNA]</scope>
    <source>
        <strain>LT2 / SGSC1412 / ATCC 700720</strain>
    </source>
</reference>
<reference key="4">
    <citation type="journal article" date="2009" name="PLoS Pathog.">
        <title>Coordinated regulation of virulence during systemic infection of Salmonella enterica serovar Typhimurium.</title>
        <authorList>
            <person name="Yoon H."/>
            <person name="McDermott J.E."/>
            <person name="Porwollik S."/>
            <person name="McClelland M."/>
            <person name="Heffron F."/>
        </authorList>
    </citation>
    <scope>DISRUPTION PHENOTYPE</scope>
    <source>
        <strain evidence="5">14028s / SGSC 2262</strain>
    </source>
</reference>
<accession>P0A2T6</accession>
<accession>P06170</accession>
<accession>P29282</accession>
<sequence length="210" mass="23656">MVLGKPQTDPTLEWFLSHCHIHKYPSKSTLIHQGEKAETLYYIVKGSVAVLIKDEEGKEMILSYLNQGDFIGELGLFEEGQERSAWVRAKTACEVAEISYKKFRQLIQVNPDILMRLSSQMARRLQVTSEKVGNLAFLDVTGRIAQTLLNLAKQPDAMTHPDGMQIKITRQEIGQIVGCSRETVGRILKMLEDQNLISAHGKTIVVYGTR</sequence>
<organism>
    <name type="scientific">Salmonella typhimurium (strain LT2 / SGSC1412 / ATCC 700720)</name>
    <dbReference type="NCBI Taxonomy" id="99287"/>
    <lineage>
        <taxon>Bacteria</taxon>
        <taxon>Pseudomonadati</taxon>
        <taxon>Pseudomonadota</taxon>
        <taxon>Gammaproteobacteria</taxon>
        <taxon>Enterobacterales</taxon>
        <taxon>Enterobacteriaceae</taxon>
        <taxon>Salmonella</taxon>
    </lineage>
</organism>
<dbReference type="EMBL" id="M13773">
    <property type="protein sequence ID" value="AAA27039.1"/>
    <property type="molecule type" value="Genomic_DNA"/>
</dbReference>
<dbReference type="EMBL" id="M13770">
    <property type="protein sequence ID" value="AAA62414.1"/>
    <property type="molecule type" value="Genomic_DNA"/>
</dbReference>
<dbReference type="EMBL" id="AE006468">
    <property type="protein sequence ID" value="AAL22328.1"/>
    <property type="molecule type" value="Genomic_DNA"/>
</dbReference>
<dbReference type="PIR" id="A26049">
    <property type="entry name" value="A26049"/>
</dbReference>
<dbReference type="RefSeq" id="NP_462369.1">
    <property type="nucleotide sequence ID" value="NC_003197.2"/>
</dbReference>
<dbReference type="RefSeq" id="WP_000242758.1">
    <property type="nucleotide sequence ID" value="NC_003197.2"/>
</dbReference>
<dbReference type="BMRB" id="P0A2T6"/>
<dbReference type="SMR" id="P0A2T6"/>
<dbReference type="STRING" id="99287.STM3466"/>
<dbReference type="PaxDb" id="99287-STM3466"/>
<dbReference type="GeneID" id="1254989"/>
<dbReference type="GeneID" id="98390475"/>
<dbReference type="KEGG" id="stm:STM3466"/>
<dbReference type="PATRIC" id="fig|99287.12.peg.3663"/>
<dbReference type="HOGENOM" id="CLU_075053_3_5_6"/>
<dbReference type="OMA" id="KTMVVYG"/>
<dbReference type="PhylomeDB" id="P0A2T6"/>
<dbReference type="BioCyc" id="SENT99287:STM3466-MONOMER"/>
<dbReference type="PHI-base" id="PHI:2684"/>
<dbReference type="PRO" id="PR:P0A2T6"/>
<dbReference type="Proteomes" id="UP000001014">
    <property type="component" value="Chromosome"/>
</dbReference>
<dbReference type="CollecTF" id="EXPREG_00000730"/>
<dbReference type="GO" id="GO:0005829">
    <property type="term" value="C:cytosol"/>
    <property type="evidence" value="ECO:0000318"/>
    <property type="project" value="GO_Central"/>
</dbReference>
<dbReference type="GO" id="GO:0032993">
    <property type="term" value="C:protein-DNA complex"/>
    <property type="evidence" value="ECO:0000315"/>
    <property type="project" value="CollecTF"/>
</dbReference>
<dbReference type="GO" id="GO:0030552">
    <property type="term" value="F:cAMP binding"/>
    <property type="evidence" value="ECO:0007669"/>
    <property type="project" value="UniProtKB-KW"/>
</dbReference>
<dbReference type="GO" id="GO:0001216">
    <property type="term" value="F:DNA-binding transcription activator activity"/>
    <property type="evidence" value="ECO:0000315"/>
    <property type="project" value="CollecTF"/>
</dbReference>
<dbReference type="GO" id="GO:0003700">
    <property type="term" value="F:DNA-binding transcription factor activity"/>
    <property type="evidence" value="ECO:0000318"/>
    <property type="project" value="GO_Central"/>
</dbReference>
<dbReference type="GO" id="GO:0000976">
    <property type="term" value="F:transcription cis-regulatory region binding"/>
    <property type="evidence" value="ECO:0000315"/>
    <property type="project" value="CollecTF"/>
</dbReference>
<dbReference type="GO" id="GO:0045893">
    <property type="term" value="P:positive regulation of DNA-templated transcription"/>
    <property type="evidence" value="ECO:0000270"/>
    <property type="project" value="CollecTF"/>
</dbReference>
<dbReference type="CDD" id="cd00038">
    <property type="entry name" value="CAP_ED"/>
    <property type="match status" value="1"/>
</dbReference>
<dbReference type="CDD" id="cd00092">
    <property type="entry name" value="HTH_CRP"/>
    <property type="match status" value="1"/>
</dbReference>
<dbReference type="FunFam" id="1.10.10.10:FF:000006">
    <property type="entry name" value="cAMP-activated global transcriptional regulator CRP"/>
    <property type="match status" value="1"/>
</dbReference>
<dbReference type="FunFam" id="2.60.120.10:FF:000001">
    <property type="entry name" value="cAMP-activated global transcriptional regulator CRP"/>
    <property type="match status" value="1"/>
</dbReference>
<dbReference type="Gene3D" id="2.60.120.10">
    <property type="entry name" value="Jelly Rolls"/>
    <property type="match status" value="1"/>
</dbReference>
<dbReference type="Gene3D" id="1.10.10.10">
    <property type="entry name" value="Winged helix-like DNA-binding domain superfamily/Winged helix DNA-binding domain"/>
    <property type="match status" value="1"/>
</dbReference>
<dbReference type="InterPro" id="IPR018488">
    <property type="entry name" value="cNMP-bd_CS"/>
</dbReference>
<dbReference type="InterPro" id="IPR000595">
    <property type="entry name" value="cNMP-bd_dom"/>
</dbReference>
<dbReference type="InterPro" id="IPR018490">
    <property type="entry name" value="cNMP-bd_dom_sf"/>
</dbReference>
<dbReference type="InterPro" id="IPR050397">
    <property type="entry name" value="Env_Response_Regulators"/>
</dbReference>
<dbReference type="InterPro" id="IPR012318">
    <property type="entry name" value="HTH_CRP"/>
</dbReference>
<dbReference type="InterPro" id="IPR014710">
    <property type="entry name" value="RmlC-like_jellyroll"/>
</dbReference>
<dbReference type="InterPro" id="IPR018335">
    <property type="entry name" value="Tscrpt_reg_HTH_Crp-type_CS"/>
</dbReference>
<dbReference type="InterPro" id="IPR036388">
    <property type="entry name" value="WH-like_DNA-bd_sf"/>
</dbReference>
<dbReference type="InterPro" id="IPR036390">
    <property type="entry name" value="WH_DNA-bd_sf"/>
</dbReference>
<dbReference type="NCBIfam" id="NF008732">
    <property type="entry name" value="PRK11753.1"/>
    <property type="match status" value="1"/>
</dbReference>
<dbReference type="PANTHER" id="PTHR24567">
    <property type="entry name" value="CRP FAMILY TRANSCRIPTIONAL REGULATORY PROTEIN"/>
    <property type="match status" value="1"/>
</dbReference>
<dbReference type="PANTHER" id="PTHR24567:SF68">
    <property type="entry name" value="DNA-BINDING TRANSCRIPTIONAL DUAL REGULATOR CRP"/>
    <property type="match status" value="1"/>
</dbReference>
<dbReference type="Pfam" id="PF00027">
    <property type="entry name" value="cNMP_binding"/>
    <property type="match status" value="1"/>
</dbReference>
<dbReference type="Pfam" id="PF13545">
    <property type="entry name" value="HTH_Crp_2"/>
    <property type="match status" value="1"/>
</dbReference>
<dbReference type="PRINTS" id="PR00034">
    <property type="entry name" value="HTHCRP"/>
</dbReference>
<dbReference type="SMART" id="SM00100">
    <property type="entry name" value="cNMP"/>
    <property type="match status" value="1"/>
</dbReference>
<dbReference type="SMART" id="SM00419">
    <property type="entry name" value="HTH_CRP"/>
    <property type="match status" value="1"/>
</dbReference>
<dbReference type="SUPFAM" id="SSF51206">
    <property type="entry name" value="cAMP-binding domain-like"/>
    <property type="match status" value="1"/>
</dbReference>
<dbReference type="SUPFAM" id="SSF46785">
    <property type="entry name" value="Winged helix' DNA-binding domain"/>
    <property type="match status" value="1"/>
</dbReference>
<dbReference type="PROSITE" id="PS00888">
    <property type="entry name" value="CNMP_BINDING_1"/>
    <property type="match status" value="1"/>
</dbReference>
<dbReference type="PROSITE" id="PS00889">
    <property type="entry name" value="CNMP_BINDING_2"/>
    <property type="match status" value="1"/>
</dbReference>
<dbReference type="PROSITE" id="PS50042">
    <property type="entry name" value="CNMP_BINDING_3"/>
    <property type="match status" value="1"/>
</dbReference>
<dbReference type="PROSITE" id="PS00042">
    <property type="entry name" value="HTH_CRP_1"/>
    <property type="match status" value="1"/>
</dbReference>
<dbReference type="PROSITE" id="PS51063">
    <property type="entry name" value="HTH_CRP_2"/>
    <property type="match status" value="1"/>
</dbReference>
<gene>
    <name type="primary">crp</name>
    <name type="synonym">cap</name>
    <name type="ordered locus">STM3466</name>
</gene>
<proteinExistence type="evidence at protein level"/>
<keyword id="KW-0007">Acetylation</keyword>
<keyword id="KW-0010">Activator</keyword>
<keyword id="KW-0114">cAMP</keyword>
<keyword id="KW-0116">cAMP-binding</keyword>
<keyword id="KW-0238">DNA-binding</keyword>
<keyword id="KW-0547">Nucleotide-binding</keyword>
<keyword id="KW-1185">Reference proteome</keyword>
<keyword id="KW-0804">Transcription</keyword>
<keyword id="KW-0805">Transcription regulation</keyword>
<name>CRP_SALTY</name>